<dbReference type="EMBL" id="AE014298">
    <property type="protein sequence ID" value="AAF46064.1"/>
    <property type="molecule type" value="Genomic_DNA"/>
</dbReference>
<dbReference type="EMBL" id="AF145649">
    <property type="protein sequence ID" value="AAD38624.1"/>
    <property type="molecule type" value="mRNA"/>
</dbReference>
<dbReference type="RefSeq" id="NP_572246.1">
    <property type="nucleotide sequence ID" value="NM_132018.3"/>
</dbReference>
<dbReference type="SMR" id="Q9Y123"/>
<dbReference type="BioGRID" id="57991">
    <property type="interactions" value="1"/>
</dbReference>
<dbReference type="FunCoup" id="Q9Y123">
    <property type="interactions" value="1429"/>
</dbReference>
<dbReference type="STRING" id="7227.FBpp0070811"/>
<dbReference type="PaxDb" id="7227-FBpp0070811"/>
<dbReference type="DNASU" id="31489"/>
<dbReference type="EnsemblMetazoa" id="FBtr0070846">
    <property type="protein sequence ID" value="FBpp0070811"/>
    <property type="gene ID" value="FBgn0027564"/>
</dbReference>
<dbReference type="GeneID" id="31489"/>
<dbReference type="KEGG" id="dme:Dmel_CG3149"/>
<dbReference type="UCSC" id="CG3149-RA">
    <property type="organism name" value="d. melanogaster"/>
</dbReference>
<dbReference type="AGR" id="FB:FBgn0027564"/>
<dbReference type="FlyBase" id="FBgn0027564">
    <property type="gene designation" value="CG3149"/>
</dbReference>
<dbReference type="VEuPathDB" id="VectorBase:FBgn0027564"/>
<dbReference type="eggNOG" id="KOG2864">
    <property type="taxonomic scope" value="Eukaryota"/>
</dbReference>
<dbReference type="GeneTree" id="ENSGT00390000011390"/>
<dbReference type="HOGENOM" id="CLU_023360_5_0_1"/>
<dbReference type="InParanoid" id="Q9Y123"/>
<dbReference type="OMA" id="WPGKLFG"/>
<dbReference type="OrthoDB" id="9979195at2759"/>
<dbReference type="PhylomeDB" id="Q9Y123"/>
<dbReference type="UniPathway" id="UPA00378"/>
<dbReference type="BioGRID-ORCS" id="31489">
    <property type="hits" value="0 hits in 1 CRISPR screen"/>
</dbReference>
<dbReference type="GenomeRNAi" id="31489"/>
<dbReference type="PRO" id="PR:Q9Y123"/>
<dbReference type="Proteomes" id="UP000000803">
    <property type="component" value="Chromosome X"/>
</dbReference>
<dbReference type="Bgee" id="FBgn0027564">
    <property type="expression patterns" value="Expressed in second segment of antenna (Drosophila) and 66 other cell types or tissues"/>
</dbReference>
<dbReference type="GO" id="GO:0005789">
    <property type="term" value="C:endoplasmic reticulum membrane"/>
    <property type="evidence" value="ECO:0000318"/>
    <property type="project" value="GO_Central"/>
</dbReference>
<dbReference type="GO" id="GO:0006488">
    <property type="term" value="P:dolichol-linked oligosaccharide biosynthetic process"/>
    <property type="evidence" value="ECO:0000250"/>
    <property type="project" value="UniProtKB"/>
</dbReference>
<dbReference type="GO" id="GO:0034203">
    <property type="term" value="P:glycolipid translocation"/>
    <property type="evidence" value="ECO:0000250"/>
    <property type="project" value="UniProtKB"/>
</dbReference>
<dbReference type="GO" id="GO:0006487">
    <property type="term" value="P:protein N-linked glycosylation"/>
    <property type="evidence" value="ECO:0000250"/>
    <property type="project" value="UniProtKB"/>
</dbReference>
<dbReference type="InterPro" id="IPR007594">
    <property type="entry name" value="RFT1"/>
</dbReference>
<dbReference type="PANTHER" id="PTHR13117">
    <property type="entry name" value="ENDOPLASMIC RETICULUM MULTISPAN TRANSMEMBRANE PROTEIN-RELATED"/>
    <property type="match status" value="1"/>
</dbReference>
<dbReference type="PANTHER" id="PTHR13117:SF5">
    <property type="entry name" value="PROTEIN RFT1 HOMOLOG"/>
    <property type="match status" value="1"/>
</dbReference>
<dbReference type="Pfam" id="PF04506">
    <property type="entry name" value="Rft-1"/>
    <property type="match status" value="1"/>
</dbReference>
<gene>
    <name type="ORF">CG3149</name>
</gene>
<organism>
    <name type="scientific">Drosophila melanogaster</name>
    <name type="common">Fruit fly</name>
    <dbReference type="NCBI Taxonomy" id="7227"/>
    <lineage>
        <taxon>Eukaryota</taxon>
        <taxon>Metazoa</taxon>
        <taxon>Ecdysozoa</taxon>
        <taxon>Arthropoda</taxon>
        <taxon>Hexapoda</taxon>
        <taxon>Insecta</taxon>
        <taxon>Pterygota</taxon>
        <taxon>Neoptera</taxon>
        <taxon>Endopterygota</taxon>
        <taxon>Diptera</taxon>
        <taxon>Brachycera</taxon>
        <taxon>Muscomorpha</taxon>
        <taxon>Ephydroidea</taxon>
        <taxon>Drosophilidae</taxon>
        <taxon>Drosophila</taxon>
        <taxon>Sophophora</taxon>
    </lineage>
</organism>
<sequence>MARNVLESSLLGAGFSIIFQILCRILTFGINAYIVRHVGREVLGIMNVRLLLLESTLLFLSREAINRAALSANAQQGDRCSWAQLINQMWLTVPICAVLCAPCLYIWLNWLSAVDAIYASQYEFACYAVAFSCVLELMAESAVFVAQVFCFVKLKILLNTLHILVRSAIFLWIVTGDRSAAINAFAIAQLSSAVTIVLGQYGFFYFYLKGFKDFVTQQAKKKPVAPKAWQVSLYEHMDDFPFKQLSDFLPGVMFNPNGKHFNRELQTLTLSFVKQGVLKQILTEGEKYVMSVSPVLSFGEQATYDVVNNLGSMAARFIFRPIEDSSYFYFTQTLSRDIKLAKQPQERVRQASSVLNNLLLGVSSIGLIAFTFGQSYSYPVLLLYGGPDFVAGGLPQSLLQWHCLAIYLLAVNGISEGYMFATNTSRDIDKYNYLMAIFSVSFLVLSYILTGIFGPVGFIFANCINMLSRILYSTYYIRHQYRPLSLDPLLGLWPGKLFGCTLFLAGIVCYWYQSSDLATHLGVGVLAGLACLLSWALAHRDLVRLAWRYGRRIKIE</sequence>
<comment type="function">
    <text evidence="1 2">Intramembrane glycolipid transporter that operates in the biosynthetic pathway of dolichol-linked oligosaccharides, the glycan precursors employed in protein asparagine (N)-glycosylation. The sequential addition of sugars to dolichol pyrophosphate produces dolichol-linked oligosaccharides containing fourteen sugars, including two GlcNAcs, nine mannoses and three glucoses. Once assembled, the oligosaccharide is transferred from the lipid to nascent proteins by oligosaccharyltransferases. The assembly of dolichol-linked oligosaccharides begins on the cytosolic side of the endoplasmic reticulum membrane and finishes in its lumen. RFT1 could mediate the translocation of the cytosolically oriented intermediate DolPP-GlcNAc2Man5, produced by ALG11, into the ER lumen where dolichol-linked oligosaccharides assembly continues (By similarity). However, the intramembrane lipid transporter activity could not be confirmed in vitro (By similarity).</text>
</comment>
<comment type="pathway">
    <text evidence="2">Protein modification; protein glycosylation.</text>
</comment>
<comment type="subcellular location">
    <subcellularLocation>
        <location evidence="1">Endoplasmic reticulum membrane</location>
        <topology evidence="3">Multi-pass membrane protein</topology>
    </subcellularLocation>
</comment>
<comment type="similarity">
    <text evidence="4">Belongs to the RFT1 family.</text>
</comment>
<protein>
    <recommendedName>
        <fullName evidence="2">Man(5)GlcNAc(2)-PP-dolichol translocation protein RFT1</fullName>
    </recommendedName>
    <alternativeName>
        <fullName evidence="2">Protein RFT1 homolog</fullName>
    </alternativeName>
</protein>
<accession>Q9Y123</accession>
<evidence type="ECO:0000250" key="1">
    <source>
        <dbReference type="UniProtKB" id="P38206"/>
    </source>
</evidence>
<evidence type="ECO:0000250" key="2">
    <source>
        <dbReference type="UniProtKB" id="Q96AA3"/>
    </source>
</evidence>
<evidence type="ECO:0000255" key="3"/>
<evidence type="ECO:0000305" key="4"/>
<keyword id="KW-0256">Endoplasmic reticulum</keyword>
<keyword id="KW-0472">Membrane</keyword>
<keyword id="KW-1185">Reference proteome</keyword>
<keyword id="KW-0812">Transmembrane</keyword>
<keyword id="KW-1133">Transmembrane helix</keyword>
<proteinExistence type="evidence at transcript level"/>
<name>RFT1_DROME</name>
<reference key="1">
    <citation type="journal article" date="2000" name="Science">
        <title>The genome sequence of Drosophila melanogaster.</title>
        <authorList>
            <person name="Adams M.D."/>
            <person name="Celniker S.E."/>
            <person name="Holt R.A."/>
            <person name="Evans C.A."/>
            <person name="Gocayne J.D."/>
            <person name="Amanatides P.G."/>
            <person name="Scherer S.E."/>
            <person name="Li P.W."/>
            <person name="Hoskins R.A."/>
            <person name="Galle R.F."/>
            <person name="George R.A."/>
            <person name="Lewis S.E."/>
            <person name="Richards S."/>
            <person name="Ashburner M."/>
            <person name="Henderson S.N."/>
            <person name="Sutton G.G."/>
            <person name="Wortman J.R."/>
            <person name="Yandell M.D."/>
            <person name="Zhang Q."/>
            <person name="Chen L.X."/>
            <person name="Brandon R.C."/>
            <person name="Rogers Y.-H.C."/>
            <person name="Blazej R.G."/>
            <person name="Champe M."/>
            <person name="Pfeiffer B.D."/>
            <person name="Wan K.H."/>
            <person name="Doyle C."/>
            <person name="Baxter E.G."/>
            <person name="Helt G."/>
            <person name="Nelson C.R."/>
            <person name="Miklos G.L.G."/>
            <person name="Abril J.F."/>
            <person name="Agbayani A."/>
            <person name="An H.-J."/>
            <person name="Andrews-Pfannkoch C."/>
            <person name="Baldwin D."/>
            <person name="Ballew R.M."/>
            <person name="Basu A."/>
            <person name="Baxendale J."/>
            <person name="Bayraktaroglu L."/>
            <person name="Beasley E.M."/>
            <person name="Beeson K.Y."/>
            <person name="Benos P.V."/>
            <person name="Berman B.P."/>
            <person name="Bhandari D."/>
            <person name="Bolshakov S."/>
            <person name="Borkova D."/>
            <person name="Botchan M.R."/>
            <person name="Bouck J."/>
            <person name="Brokstein P."/>
            <person name="Brottier P."/>
            <person name="Burtis K.C."/>
            <person name="Busam D.A."/>
            <person name="Butler H."/>
            <person name="Cadieu E."/>
            <person name="Center A."/>
            <person name="Chandra I."/>
            <person name="Cherry J.M."/>
            <person name="Cawley S."/>
            <person name="Dahlke C."/>
            <person name="Davenport L.B."/>
            <person name="Davies P."/>
            <person name="de Pablos B."/>
            <person name="Delcher A."/>
            <person name="Deng Z."/>
            <person name="Mays A.D."/>
            <person name="Dew I."/>
            <person name="Dietz S.M."/>
            <person name="Dodson K."/>
            <person name="Doup L.E."/>
            <person name="Downes M."/>
            <person name="Dugan-Rocha S."/>
            <person name="Dunkov B.C."/>
            <person name="Dunn P."/>
            <person name="Durbin K.J."/>
            <person name="Evangelista C.C."/>
            <person name="Ferraz C."/>
            <person name="Ferriera S."/>
            <person name="Fleischmann W."/>
            <person name="Fosler C."/>
            <person name="Gabrielian A.E."/>
            <person name="Garg N.S."/>
            <person name="Gelbart W.M."/>
            <person name="Glasser K."/>
            <person name="Glodek A."/>
            <person name="Gong F."/>
            <person name="Gorrell J.H."/>
            <person name="Gu Z."/>
            <person name="Guan P."/>
            <person name="Harris M."/>
            <person name="Harris N.L."/>
            <person name="Harvey D.A."/>
            <person name="Heiman T.J."/>
            <person name="Hernandez J.R."/>
            <person name="Houck J."/>
            <person name="Hostin D."/>
            <person name="Houston K.A."/>
            <person name="Howland T.J."/>
            <person name="Wei M.-H."/>
            <person name="Ibegwam C."/>
            <person name="Jalali M."/>
            <person name="Kalush F."/>
            <person name="Karpen G.H."/>
            <person name="Ke Z."/>
            <person name="Kennison J.A."/>
            <person name="Ketchum K.A."/>
            <person name="Kimmel B.E."/>
            <person name="Kodira C.D."/>
            <person name="Kraft C.L."/>
            <person name="Kravitz S."/>
            <person name="Kulp D."/>
            <person name="Lai Z."/>
            <person name="Lasko P."/>
            <person name="Lei Y."/>
            <person name="Levitsky A.A."/>
            <person name="Li J.H."/>
            <person name="Li Z."/>
            <person name="Liang Y."/>
            <person name="Lin X."/>
            <person name="Liu X."/>
            <person name="Mattei B."/>
            <person name="McIntosh T.C."/>
            <person name="McLeod M.P."/>
            <person name="McPherson D."/>
            <person name="Merkulov G."/>
            <person name="Milshina N.V."/>
            <person name="Mobarry C."/>
            <person name="Morris J."/>
            <person name="Moshrefi A."/>
            <person name="Mount S.M."/>
            <person name="Moy M."/>
            <person name="Murphy B."/>
            <person name="Murphy L."/>
            <person name="Muzny D.M."/>
            <person name="Nelson D.L."/>
            <person name="Nelson D.R."/>
            <person name="Nelson K.A."/>
            <person name="Nixon K."/>
            <person name="Nusskern D.R."/>
            <person name="Pacleb J.M."/>
            <person name="Palazzolo M."/>
            <person name="Pittman G.S."/>
            <person name="Pan S."/>
            <person name="Pollard J."/>
            <person name="Puri V."/>
            <person name="Reese M.G."/>
            <person name="Reinert K."/>
            <person name="Remington K."/>
            <person name="Saunders R.D.C."/>
            <person name="Scheeler F."/>
            <person name="Shen H."/>
            <person name="Shue B.C."/>
            <person name="Siden-Kiamos I."/>
            <person name="Simpson M."/>
            <person name="Skupski M.P."/>
            <person name="Smith T.J."/>
            <person name="Spier E."/>
            <person name="Spradling A.C."/>
            <person name="Stapleton M."/>
            <person name="Strong R."/>
            <person name="Sun E."/>
            <person name="Svirskas R."/>
            <person name="Tector C."/>
            <person name="Turner R."/>
            <person name="Venter E."/>
            <person name="Wang A.H."/>
            <person name="Wang X."/>
            <person name="Wang Z.-Y."/>
            <person name="Wassarman D.A."/>
            <person name="Weinstock G.M."/>
            <person name="Weissenbach J."/>
            <person name="Williams S.M."/>
            <person name="Woodage T."/>
            <person name="Worley K.C."/>
            <person name="Wu D."/>
            <person name="Yang S."/>
            <person name="Yao Q.A."/>
            <person name="Ye J."/>
            <person name="Yeh R.-F."/>
            <person name="Zaveri J.S."/>
            <person name="Zhan M."/>
            <person name="Zhang G."/>
            <person name="Zhao Q."/>
            <person name="Zheng L."/>
            <person name="Zheng X.H."/>
            <person name="Zhong F.N."/>
            <person name="Zhong W."/>
            <person name="Zhou X."/>
            <person name="Zhu S.C."/>
            <person name="Zhu X."/>
            <person name="Smith H.O."/>
            <person name="Gibbs R.A."/>
            <person name="Myers E.W."/>
            <person name="Rubin G.M."/>
            <person name="Venter J.C."/>
        </authorList>
    </citation>
    <scope>NUCLEOTIDE SEQUENCE [LARGE SCALE GENOMIC DNA]</scope>
    <source>
        <strain>Berkeley</strain>
    </source>
</reference>
<reference key="2">
    <citation type="journal article" date="2002" name="Genome Biol.">
        <title>Annotation of the Drosophila melanogaster euchromatic genome: a systematic review.</title>
        <authorList>
            <person name="Misra S."/>
            <person name="Crosby M.A."/>
            <person name="Mungall C.J."/>
            <person name="Matthews B.B."/>
            <person name="Campbell K.S."/>
            <person name="Hradecky P."/>
            <person name="Huang Y."/>
            <person name="Kaminker J.S."/>
            <person name="Millburn G.H."/>
            <person name="Prochnik S.E."/>
            <person name="Smith C.D."/>
            <person name="Tupy J.L."/>
            <person name="Whitfield E.J."/>
            <person name="Bayraktaroglu L."/>
            <person name="Berman B.P."/>
            <person name="Bettencourt B.R."/>
            <person name="Celniker S.E."/>
            <person name="de Grey A.D.N.J."/>
            <person name="Drysdale R.A."/>
            <person name="Harris N.L."/>
            <person name="Richter J."/>
            <person name="Russo S."/>
            <person name="Schroeder A.J."/>
            <person name="Shu S.Q."/>
            <person name="Stapleton M."/>
            <person name="Yamada C."/>
            <person name="Ashburner M."/>
            <person name="Gelbart W.M."/>
            <person name="Rubin G.M."/>
            <person name="Lewis S.E."/>
        </authorList>
    </citation>
    <scope>GENOME REANNOTATION</scope>
    <source>
        <strain>Berkeley</strain>
    </source>
</reference>
<reference key="3">
    <citation type="journal article" date="2000" name="Science">
        <title>A Drosophila complementary DNA resource.</title>
        <authorList>
            <person name="Rubin G.M."/>
            <person name="Hong L."/>
            <person name="Brokstein P."/>
            <person name="Evans-Holm M."/>
            <person name="Frise E."/>
            <person name="Stapleton M."/>
            <person name="Harvey D.A."/>
        </authorList>
    </citation>
    <scope>NUCLEOTIDE SEQUENCE [LARGE SCALE MRNA]</scope>
    <source>
        <strain>Berkeley</strain>
        <tissue>Head</tissue>
    </source>
</reference>
<feature type="chain" id="PRO_0000311290" description="Man(5)GlcNAc(2)-PP-dolichol translocation protein RFT1">
    <location>
        <begin position="1"/>
        <end position="556"/>
    </location>
</feature>
<feature type="transmembrane region" description="Helical" evidence="3">
    <location>
        <begin position="10"/>
        <end position="30"/>
    </location>
</feature>
<feature type="transmembrane region" description="Helical" evidence="3">
    <location>
        <begin position="41"/>
        <end position="61"/>
    </location>
</feature>
<feature type="transmembrane region" description="Helical" evidence="3">
    <location>
        <begin position="91"/>
        <end position="111"/>
    </location>
</feature>
<feature type="transmembrane region" description="Helical" evidence="3">
    <location>
        <begin position="129"/>
        <end position="149"/>
    </location>
</feature>
<feature type="transmembrane region" description="Helical" evidence="3">
    <location>
        <begin position="156"/>
        <end position="176"/>
    </location>
</feature>
<feature type="transmembrane region" description="Helical" evidence="3">
    <location>
        <begin position="184"/>
        <end position="204"/>
    </location>
</feature>
<feature type="transmembrane region" description="Helical" evidence="3">
    <location>
        <begin position="353"/>
        <end position="373"/>
    </location>
</feature>
<feature type="transmembrane region" description="Helical" evidence="3">
    <location>
        <begin position="389"/>
        <end position="409"/>
    </location>
</feature>
<feature type="transmembrane region" description="Helical" evidence="3">
    <location>
        <begin position="440"/>
        <end position="460"/>
    </location>
</feature>
<feature type="transmembrane region" description="Helical" evidence="3">
    <location>
        <begin position="461"/>
        <end position="477"/>
    </location>
</feature>
<feature type="transmembrane region" description="Helical" evidence="3">
    <location>
        <begin position="489"/>
        <end position="509"/>
    </location>
</feature>
<feature type="transmembrane region" description="Helical" evidence="3">
    <location>
        <begin position="517"/>
        <end position="537"/>
    </location>
</feature>